<organism>
    <name type="scientific">Verticillium dahliae (strain VdLs.17 / ATCC MYA-4575 / FGSC 10137)</name>
    <name type="common">Verticillium wilt</name>
    <dbReference type="NCBI Taxonomy" id="498257"/>
    <lineage>
        <taxon>Eukaryota</taxon>
        <taxon>Fungi</taxon>
        <taxon>Dikarya</taxon>
        <taxon>Ascomycota</taxon>
        <taxon>Pezizomycotina</taxon>
        <taxon>Sordariomycetes</taxon>
        <taxon>Hypocreomycetidae</taxon>
        <taxon>Glomerellales</taxon>
        <taxon>Plectosphaerellaceae</taxon>
        <taxon>Verticillium</taxon>
    </lineage>
</organism>
<dbReference type="EC" id="3.2.1.8" evidence="4"/>
<dbReference type="EMBL" id="DS572703">
    <property type="protein sequence ID" value="EGY23605.1"/>
    <property type="molecule type" value="Genomic_DNA"/>
</dbReference>
<dbReference type="RefSeq" id="XP_009653074.1">
    <property type="nucleotide sequence ID" value="XM_009654779.1"/>
</dbReference>
<dbReference type="EnsemblFungi" id="EGY23605">
    <property type="protein sequence ID" value="EGY23605"/>
    <property type="gene ID" value="VDAG_05043"/>
</dbReference>
<dbReference type="GeneID" id="20706506"/>
<dbReference type="KEGG" id="vda:VDAG_05043"/>
<dbReference type="eggNOG" id="ENOG502RXA7">
    <property type="taxonomic scope" value="Eukaryota"/>
</dbReference>
<dbReference type="HOGENOM" id="CLU_052631_0_0_1"/>
<dbReference type="InParanoid" id="G2X4G1"/>
<dbReference type="OMA" id="HFEAWIS"/>
<dbReference type="OrthoDB" id="9408at1028384"/>
<dbReference type="UniPathway" id="UPA00114"/>
<dbReference type="Proteomes" id="UP000001611">
    <property type="component" value="Chromosome 4"/>
</dbReference>
<dbReference type="GO" id="GO:0031176">
    <property type="term" value="F:endo-1,4-beta-xylanase activity"/>
    <property type="evidence" value="ECO:0007669"/>
    <property type="project" value="UniProtKB-UniRule"/>
</dbReference>
<dbReference type="GO" id="GO:0045493">
    <property type="term" value="P:xylan catabolic process"/>
    <property type="evidence" value="ECO:0007669"/>
    <property type="project" value="UniProtKB-UniRule"/>
</dbReference>
<dbReference type="Gene3D" id="2.60.120.180">
    <property type="match status" value="1"/>
</dbReference>
<dbReference type="InterPro" id="IPR013320">
    <property type="entry name" value="ConA-like_dom_sf"/>
</dbReference>
<dbReference type="InterPro" id="IPR013319">
    <property type="entry name" value="GH11/12"/>
</dbReference>
<dbReference type="InterPro" id="IPR033119">
    <property type="entry name" value="GH11_AS_2"/>
</dbReference>
<dbReference type="InterPro" id="IPR033123">
    <property type="entry name" value="GH11_dom"/>
</dbReference>
<dbReference type="InterPro" id="IPR001137">
    <property type="entry name" value="Glyco_hydro_11"/>
</dbReference>
<dbReference type="PANTHER" id="PTHR46828:SF3">
    <property type="entry name" value="ENDO-1,4-BETA-XYLANASE"/>
    <property type="match status" value="1"/>
</dbReference>
<dbReference type="PANTHER" id="PTHR46828">
    <property type="entry name" value="ENDO-1,4-BETA-XYLANASE A-RELATED"/>
    <property type="match status" value="1"/>
</dbReference>
<dbReference type="Pfam" id="PF00457">
    <property type="entry name" value="Glyco_hydro_11"/>
    <property type="match status" value="1"/>
</dbReference>
<dbReference type="PRINTS" id="PR00911">
    <property type="entry name" value="GLHYDRLASE11"/>
</dbReference>
<dbReference type="SUPFAM" id="SSF49899">
    <property type="entry name" value="Concanavalin A-like lectins/glucanases"/>
    <property type="match status" value="1"/>
</dbReference>
<dbReference type="PROSITE" id="PS00777">
    <property type="entry name" value="GH11_2"/>
    <property type="match status" value="1"/>
</dbReference>
<dbReference type="PROSITE" id="PS51761">
    <property type="entry name" value="GH11_3"/>
    <property type="match status" value="1"/>
</dbReference>
<gene>
    <name evidence="6" type="primary">EIX5</name>
    <name type="ORF">VDAG_05043</name>
</gene>
<keyword id="KW-0119">Carbohydrate metabolism</keyword>
<keyword id="KW-0325">Glycoprotein</keyword>
<keyword id="KW-0326">Glycosidase</keyword>
<keyword id="KW-0378">Hydrolase</keyword>
<keyword id="KW-0624">Polysaccharide degradation</keyword>
<keyword id="KW-1185">Reference proteome</keyword>
<keyword id="KW-0732">Signal</keyword>
<keyword id="KW-0858">Xylan degradation</keyword>
<sequence>MLKSLVVLLLTSRVIAFPTLDTDQTAALHKPQATPNSQGTHGGFFYYWWSDGQSPAAYTNLDGGSYCLRWESGGNLIGGKGWSPGTDNRTIQISGTFQGVENSYLAVYGWLETPKVEYYIVEYHGVFNPAYDAQILGTVICDGSVYDISRSTRVSSGGTKILPRYWSVRRNKRTGGTVQTGCHFDAWRSTGLSAADHGFQIVATEGYFSSGFAEMTVADTSAEE</sequence>
<reference key="1">
    <citation type="journal article" date="2011" name="PLoS Pathog.">
        <title>Comparative genomics yields insights into niche adaptation of plant vascular wilt pathogens.</title>
        <authorList>
            <person name="Klosterman S.J."/>
            <person name="Subbarao K.V."/>
            <person name="Kang S."/>
            <person name="Veronese P."/>
            <person name="Gold S.E."/>
            <person name="Thomma B.P.H.J."/>
            <person name="Chen Z."/>
            <person name="Henrissat B."/>
            <person name="Lee Y.-H."/>
            <person name="Park J."/>
            <person name="Garcia-Pedrajas M.D."/>
            <person name="Barbara D.J."/>
            <person name="Anchieta A."/>
            <person name="de Jonge R."/>
            <person name="Santhanam P."/>
            <person name="Maruthachalam K."/>
            <person name="Atallah Z."/>
            <person name="Amyotte S.G."/>
            <person name="Paz Z."/>
            <person name="Inderbitzin P."/>
            <person name="Hayes R.J."/>
            <person name="Heiman D.I."/>
            <person name="Young S."/>
            <person name="Zeng Q."/>
            <person name="Engels R."/>
            <person name="Galagan J."/>
            <person name="Cuomo C.A."/>
            <person name="Dobinson K.F."/>
            <person name="Ma L.-J."/>
        </authorList>
    </citation>
    <scope>NUCLEOTIDE SEQUENCE [LARGE SCALE GENOMIC DNA]</scope>
    <source>
        <strain>VdLs.17 / ATCC MYA-4575 / FGSC 10137</strain>
    </source>
</reference>
<reference key="2">
    <citation type="journal article" date="2021" name="J. Integr. Plant Biol.">
        <title>Nicotiana benthamiana LRR-RLP NbEIX2 mediates the perception of an EIX-like protein from Verticillium dahliae.</title>
        <authorList>
            <person name="Yin Z."/>
            <person name="Wang N."/>
            <person name="Pi L."/>
            <person name="Li L."/>
            <person name="Duan W."/>
            <person name="Wang X."/>
            <person name="Dou D."/>
        </authorList>
    </citation>
    <scope>FUNCTION</scope>
</reference>
<name>EIX5_VERDV</name>
<protein>
    <recommendedName>
        <fullName evidence="6">Ethylene-inducing xylanase 5</fullName>
        <shortName evidence="6">EIX5</shortName>
        <ecNumber evidence="4">3.2.1.8</ecNumber>
    </recommendedName>
    <alternativeName>
        <fullName evidence="6">Endo-1,4-beta-xylanase EIX5</fullName>
    </alternativeName>
</protein>
<evidence type="ECO:0000250" key="1">
    <source>
        <dbReference type="UniProtKB" id="B3VSG7"/>
    </source>
</evidence>
<evidence type="ECO:0000255" key="2"/>
<evidence type="ECO:0000255" key="3">
    <source>
        <dbReference type="PROSITE-ProRule" id="PRU00498"/>
    </source>
</evidence>
<evidence type="ECO:0000255" key="4">
    <source>
        <dbReference type="PROSITE-ProRule" id="PRU01097"/>
    </source>
</evidence>
<evidence type="ECO:0000269" key="5">
    <source>
    </source>
</evidence>
<evidence type="ECO:0000303" key="6">
    <source>
    </source>
</evidence>
<proteinExistence type="inferred from homology"/>
<accession>G2X4G1</accession>
<comment type="function">
    <text evidence="1 5">Endo-1,4-beta-xylanase involved in the hydrolysis of xylan, a major structural heterogeneous polysaccharide found in plant biomass representing the second most abundant polysaccharide in the biosphere, after cellulose (By similarity). May act as an elicitor of plant defense responses in certain plants but does not exhibit any cell death when transiently expressed in N.benthamiana (PubMed:33205907).</text>
</comment>
<comment type="catalytic activity">
    <reaction evidence="4">
        <text>Endohydrolysis of (1-&gt;4)-beta-D-xylosidic linkages in xylans.</text>
        <dbReference type="EC" id="3.2.1.8"/>
    </reaction>
</comment>
<comment type="pathway">
    <text evidence="4">Glycan degradation; xylan degradation.</text>
</comment>
<comment type="similarity">
    <text evidence="4">Belongs to the glycosyl hydrolase 11 (cellulase G) family.</text>
</comment>
<feature type="signal peptide" evidence="2">
    <location>
        <begin position="1"/>
        <end position="16"/>
    </location>
</feature>
<feature type="chain" id="PRO_5003439098" description="Ethylene-inducing xylanase 5">
    <location>
        <begin position="17"/>
        <end position="224"/>
    </location>
</feature>
<feature type="domain" description="GH11" evidence="4">
    <location>
        <begin position="32"/>
        <end position="218"/>
    </location>
</feature>
<feature type="active site" description="Nucleophile" evidence="4">
    <location>
        <position position="117"/>
    </location>
</feature>
<feature type="active site" description="Proton donor" evidence="4">
    <location>
        <position position="205"/>
    </location>
</feature>
<feature type="glycosylation site" description="N-linked (GlcNAc...) asparagine" evidence="3">
    <location>
        <position position="88"/>
    </location>
</feature>